<evidence type="ECO:0000255" key="1">
    <source>
        <dbReference type="HAMAP-Rule" id="MF_01665"/>
    </source>
</evidence>
<evidence type="ECO:0000305" key="2"/>
<reference key="1">
    <citation type="submission" date="2007-09" db="EMBL/GenBank/DDBJ databases">
        <title>Complete genome sequence of Rickettsia canadensis.</title>
        <authorList>
            <person name="Madan A."/>
            <person name="Fahey J."/>
            <person name="Helton E."/>
            <person name="Ketteman M."/>
            <person name="Madan A."/>
            <person name="Rodrigues S."/>
            <person name="Sanchez A."/>
            <person name="Whiting M."/>
            <person name="Dasch G."/>
            <person name="Eremeeva M."/>
        </authorList>
    </citation>
    <scope>NUCLEOTIDE SEQUENCE [LARGE SCALE GENOMIC DNA]</scope>
    <source>
        <strain>McKiel</strain>
    </source>
</reference>
<dbReference type="EC" id="1.17.99.9" evidence="1"/>
<dbReference type="EMBL" id="CP000409">
    <property type="protein sequence ID" value="ABV73241.1"/>
    <property type="status" value="ALT_INIT"/>
    <property type="molecule type" value="Genomic_DNA"/>
</dbReference>
<dbReference type="RefSeq" id="WP_041405228.1">
    <property type="nucleotide sequence ID" value="NC_009879.1"/>
</dbReference>
<dbReference type="SMR" id="A8EY08"/>
<dbReference type="STRING" id="293613.A1E_01480"/>
<dbReference type="KEGG" id="rcm:A1E_01480"/>
<dbReference type="eggNOG" id="COG1612">
    <property type="taxonomic scope" value="Bacteria"/>
</dbReference>
<dbReference type="HOGENOM" id="CLU_017627_0_0_5"/>
<dbReference type="UniPathway" id="UPA00269">
    <property type="reaction ID" value="UER00713"/>
</dbReference>
<dbReference type="Proteomes" id="UP000007056">
    <property type="component" value="Chromosome"/>
</dbReference>
<dbReference type="GO" id="GO:0005886">
    <property type="term" value="C:plasma membrane"/>
    <property type="evidence" value="ECO:0007669"/>
    <property type="project" value="UniProtKB-SubCell"/>
</dbReference>
<dbReference type="GO" id="GO:0046872">
    <property type="term" value="F:metal ion binding"/>
    <property type="evidence" value="ECO:0007669"/>
    <property type="project" value="UniProtKB-KW"/>
</dbReference>
<dbReference type="GO" id="GO:0016653">
    <property type="term" value="F:oxidoreductase activity, acting on NAD(P)H, heme protein as acceptor"/>
    <property type="evidence" value="ECO:0007669"/>
    <property type="project" value="InterPro"/>
</dbReference>
<dbReference type="GO" id="GO:0006784">
    <property type="term" value="P:heme A biosynthetic process"/>
    <property type="evidence" value="ECO:0007669"/>
    <property type="project" value="UniProtKB-UniRule"/>
</dbReference>
<dbReference type="HAMAP" id="MF_01665">
    <property type="entry name" value="HemeA_synth_type2"/>
    <property type="match status" value="1"/>
</dbReference>
<dbReference type="InterPro" id="IPR003780">
    <property type="entry name" value="COX15/CtaA_fam"/>
</dbReference>
<dbReference type="InterPro" id="IPR023754">
    <property type="entry name" value="HemeA_Synthase_type2"/>
</dbReference>
<dbReference type="PANTHER" id="PTHR23289">
    <property type="entry name" value="CYTOCHROME C OXIDASE ASSEMBLY PROTEIN COX15"/>
    <property type="match status" value="1"/>
</dbReference>
<dbReference type="PANTHER" id="PTHR23289:SF2">
    <property type="entry name" value="CYTOCHROME C OXIDASE ASSEMBLY PROTEIN COX15 HOMOLOG"/>
    <property type="match status" value="1"/>
</dbReference>
<dbReference type="Pfam" id="PF02628">
    <property type="entry name" value="COX15-CtaA"/>
    <property type="match status" value="1"/>
</dbReference>
<gene>
    <name evidence="1" type="primary">ctaA</name>
    <name type="ordered locus">A1E_01480</name>
</gene>
<sequence length="338" mass="38809">MQQSLITKWLSISCIMVIAMIVIGGITRLTGSGLSIVEWRPITGILPPLSFEAWQVEFAKYKAFPEYNYVNYRMTLSQFKFIYLLEFIHRLLGRITALIYIVPLIYFYFKGIIKNRDIAPYIIALLLLYVQGFMGWYMVKSGLLNNPSVSHLRLAFHLIIAVIIYHILFYQLIKNRCDILLILSQTDLKLPLRFSSVAITVIYLQIFLGALVAGLDAGLIYNSFPLMGDNFIPTAIKDNFFDLKNWYDPVFIQCIHRLGGYSVFLVVMALATYLLKIEHPKLNKIAYFLIIALLMQISTGIITLLYSVPIIIASTHQFFAIVLLSVIIWCYFLIKTSK</sequence>
<comment type="function">
    <text evidence="1">Catalyzes the conversion of heme O to heme A by two successive hydroxylations of the methyl group at C8. The first hydroxylation forms heme I, the second hydroxylation results in an unstable dihydroxymethyl group, which spontaneously dehydrates, resulting in the formyl group of heme A.</text>
</comment>
<comment type="catalytic activity">
    <reaction evidence="1">
        <text>Fe(II)-heme o + 2 A + H2O = Fe(II)-heme a + 2 AH2</text>
        <dbReference type="Rhea" id="RHEA:63388"/>
        <dbReference type="ChEBI" id="CHEBI:13193"/>
        <dbReference type="ChEBI" id="CHEBI:15377"/>
        <dbReference type="ChEBI" id="CHEBI:17499"/>
        <dbReference type="ChEBI" id="CHEBI:60530"/>
        <dbReference type="ChEBI" id="CHEBI:61715"/>
        <dbReference type="EC" id="1.17.99.9"/>
    </reaction>
    <physiologicalReaction direction="left-to-right" evidence="1">
        <dbReference type="Rhea" id="RHEA:63389"/>
    </physiologicalReaction>
</comment>
<comment type="cofactor">
    <cofactor evidence="1">
        <name>heme b</name>
        <dbReference type="ChEBI" id="CHEBI:60344"/>
    </cofactor>
</comment>
<comment type="pathway">
    <text evidence="1">Porphyrin-containing compound metabolism; heme A biosynthesis; heme A from heme O: step 1/1.</text>
</comment>
<comment type="subunit">
    <text evidence="1">Interacts with CtaB.</text>
</comment>
<comment type="subcellular location">
    <subcellularLocation>
        <location evidence="1">Cell membrane</location>
        <topology evidence="1">Multi-pass membrane protein</topology>
    </subcellularLocation>
</comment>
<comment type="similarity">
    <text evidence="1">Belongs to the COX15/CtaA family. Type 2 subfamily.</text>
</comment>
<comment type="sequence caution" evidence="2">
    <conflict type="erroneous initiation">
        <sequence resource="EMBL-CDS" id="ABV73241"/>
    </conflict>
</comment>
<accession>A8EY08</accession>
<feature type="chain" id="PRO_0000349074" description="Heme A synthase">
    <location>
        <begin position="1"/>
        <end position="338"/>
    </location>
</feature>
<feature type="transmembrane region" description="Helical" evidence="1">
    <location>
        <begin position="6"/>
        <end position="26"/>
    </location>
</feature>
<feature type="transmembrane region" description="Helical" evidence="1">
    <location>
        <begin position="93"/>
        <end position="113"/>
    </location>
</feature>
<feature type="transmembrane region" description="Helical" evidence="1">
    <location>
        <begin position="118"/>
        <end position="138"/>
    </location>
</feature>
<feature type="transmembrane region" description="Helical" evidence="1">
    <location>
        <begin position="154"/>
        <end position="174"/>
    </location>
</feature>
<feature type="transmembrane region" description="Helical" evidence="1">
    <location>
        <begin position="201"/>
        <end position="221"/>
    </location>
</feature>
<feature type="transmembrane region" description="Helical" evidence="1">
    <location>
        <begin position="258"/>
        <end position="278"/>
    </location>
</feature>
<feature type="transmembrane region" description="Helical" evidence="1">
    <location>
        <begin position="285"/>
        <end position="305"/>
    </location>
</feature>
<feature type="transmembrane region" description="Helical" evidence="1">
    <location>
        <begin position="308"/>
        <end position="328"/>
    </location>
</feature>
<feature type="binding site" description="axial binding residue" evidence="1">
    <location>
        <position position="256"/>
    </location>
    <ligand>
        <name>heme</name>
        <dbReference type="ChEBI" id="CHEBI:30413"/>
    </ligand>
    <ligandPart>
        <name>Fe</name>
        <dbReference type="ChEBI" id="CHEBI:18248"/>
    </ligandPart>
</feature>
<feature type="binding site" description="axial binding residue" evidence="1">
    <location>
        <position position="316"/>
    </location>
    <ligand>
        <name>heme</name>
        <dbReference type="ChEBI" id="CHEBI:30413"/>
    </ligand>
    <ligandPart>
        <name>Fe</name>
        <dbReference type="ChEBI" id="CHEBI:18248"/>
    </ligandPart>
</feature>
<keyword id="KW-1003">Cell membrane</keyword>
<keyword id="KW-0350">Heme biosynthesis</keyword>
<keyword id="KW-0408">Iron</keyword>
<keyword id="KW-0472">Membrane</keyword>
<keyword id="KW-0479">Metal-binding</keyword>
<keyword id="KW-0560">Oxidoreductase</keyword>
<keyword id="KW-0812">Transmembrane</keyword>
<keyword id="KW-1133">Transmembrane helix</keyword>
<protein>
    <recommendedName>
        <fullName evidence="1">Heme A synthase</fullName>
        <shortName evidence="1">HAS</shortName>
        <ecNumber evidence="1">1.17.99.9</ecNumber>
    </recommendedName>
    <alternativeName>
        <fullName evidence="1">Cytochrome aa3-controlling protein</fullName>
    </alternativeName>
</protein>
<proteinExistence type="inferred from homology"/>
<organism>
    <name type="scientific">Rickettsia canadensis (strain McKiel)</name>
    <dbReference type="NCBI Taxonomy" id="293613"/>
    <lineage>
        <taxon>Bacteria</taxon>
        <taxon>Pseudomonadati</taxon>
        <taxon>Pseudomonadota</taxon>
        <taxon>Alphaproteobacteria</taxon>
        <taxon>Rickettsiales</taxon>
        <taxon>Rickettsiaceae</taxon>
        <taxon>Rickettsieae</taxon>
        <taxon>Rickettsia</taxon>
        <taxon>belli group</taxon>
    </lineage>
</organism>
<name>CTAA_RICCK</name>